<sequence>MRTPRRHCRRIAVLAAVSIAATVVAGCSSGSKPSGGPLPDAKPLVEEATAQTKALKSAHMVLTVNGKIPGLSLKTLSGDLTTNPTAATGNVKLTLGGSDIDADFVVFDGILYATLTPNQWSDFGPAADIYDPAQVLNPDTGLANVLANFADAKAEGRDTINGQNTIRISGKVSAQAVNQIAPPFNATQPVPATVWIQETGDHQLAQAQLDRGSGNSVQMTLSKWGEKVQVTKPPVS</sequence>
<keyword id="KW-0002">3D-structure</keyword>
<keyword id="KW-0046">Antibiotic resistance</keyword>
<keyword id="KW-0997">Cell inner membrane</keyword>
<keyword id="KW-1003">Cell membrane</keyword>
<keyword id="KW-0134">Cell wall</keyword>
<keyword id="KW-0325">Glycoprotein</keyword>
<keyword id="KW-0445">Lipid transport</keyword>
<keyword id="KW-0446">Lipid-binding</keyword>
<keyword id="KW-0449">Lipoprotein</keyword>
<keyword id="KW-0472">Membrane</keyword>
<keyword id="KW-0564">Palmitate</keyword>
<keyword id="KW-1185">Reference proteome</keyword>
<keyword id="KW-0964">Secreted</keyword>
<keyword id="KW-0732">Signal</keyword>
<keyword id="KW-0813">Transport</keyword>
<keyword id="KW-0843">Virulence</keyword>
<dbReference type="EMBL" id="AL123456">
    <property type="protein sequence ID" value="CCP44170.1"/>
    <property type="molecule type" value="Genomic_DNA"/>
</dbReference>
<dbReference type="PIR" id="H70901">
    <property type="entry name" value="H70901"/>
</dbReference>
<dbReference type="RefSeq" id="NP_215927.1">
    <property type="nucleotide sequence ID" value="NC_000962.3"/>
</dbReference>
<dbReference type="RefSeq" id="WP_003407315.1">
    <property type="nucleotide sequence ID" value="NZ_NVQJ01000038.1"/>
</dbReference>
<dbReference type="PDB" id="3MH8">
    <property type="method" value="X-ray"/>
    <property type="resolution" value="2.00 A"/>
    <property type="chains" value="A/B=36-231"/>
</dbReference>
<dbReference type="PDB" id="3MH9">
    <property type="method" value="X-ray"/>
    <property type="resolution" value="1.79 A"/>
    <property type="chains" value="A/C=28-236"/>
</dbReference>
<dbReference type="PDB" id="3MHA">
    <property type="method" value="X-ray"/>
    <property type="resolution" value="1.85 A"/>
    <property type="chains" value="A/B=36-231"/>
</dbReference>
<dbReference type="PDB" id="4ZRA">
    <property type="method" value="X-ray"/>
    <property type="resolution" value="1.83 A"/>
    <property type="chains" value="A/C=36-231"/>
</dbReference>
<dbReference type="PDBsum" id="3MH8"/>
<dbReference type="PDBsum" id="3MH9"/>
<dbReference type="PDBsum" id="3MHA"/>
<dbReference type="PDBsum" id="4ZRA"/>
<dbReference type="SMR" id="P9WK45"/>
<dbReference type="STRING" id="83332.Rv1411c"/>
<dbReference type="TCDB" id="2.A.1.3.34">
    <property type="family name" value="the major facilitator superfamily (mfs)"/>
</dbReference>
<dbReference type="PaxDb" id="83332-Rv1411c"/>
<dbReference type="DNASU" id="886700"/>
<dbReference type="GeneID" id="886700"/>
<dbReference type="KEGG" id="mtu:Rv1411c"/>
<dbReference type="KEGG" id="mtv:RVBD_1411c"/>
<dbReference type="TubercuList" id="Rv1411c"/>
<dbReference type="eggNOG" id="ENOG50338Y0">
    <property type="taxonomic scope" value="Bacteria"/>
</dbReference>
<dbReference type="InParanoid" id="P9WK45"/>
<dbReference type="OrthoDB" id="4763237at2"/>
<dbReference type="PhylomeDB" id="P9WK45"/>
<dbReference type="Reactome" id="R-HSA-9636383">
    <property type="pathway name" value="Prevention of phagosomal-lysosomal fusion"/>
</dbReference>
<dbReference type="EvolutionaryTrace" id="P9WK45"/>
<dbReference type="PHI-base" id="PHI:5579"/>
<dbReference type="Proteomes" id="UP000001584">
    <property type="component" value="Chromosome"/>
</dbReference>
<dbReference type="GO" id="GO:0097691">
    <property type="term" value="C:bacterial extracellular vesicle"/>
    <property type="evidence" value="ECO:0000314"/>
    <property type="project" value="UniProtKB"/>
</dbReference>
<dbReference type="GO" id="GO:0009986">
    <property type="term" value="C:cell surface"/>
    <property type="evidence" value="ECO:0007669"/>
    <property type="project" value="UniProtKB-SubCell"/>
</dbReference>
<dbReference type="GO" id="GO:0005829">
    <property type="term" value="C:cytosol"/>
    <property type="evidence" value="ECO:0000304"/>
    <property type="project" value="Reactome"/>
</dbReference>
<dbReference type="GO" id="GO:0009274">
    <property type="term" value="C:peptidoglycan-based cell wall"/>
    <property type="evidence" value="ECO:0007005"/>
    <property type="project" value="MTBBASE"/>
</dbReference>
<dbReference type="GO" id="GO:0005886">
    <property type="term" value="C:plasma membrane"/>
    <property type="evidence" value="ECO:0007005"/>
    <property type="project" value="MTBBASE"/>
</dbReference>
<dbReference type="GO" id="GO:0051861">
    <property type="term" value="F:glycolipid binding"/>
    <property type="evidence" value="ECO:0000314"/>
    <property type="project" value="MTBBASE"/>
</dbReference>
<dbReference type="GO" id="GO:0035091">
    <property type="term" value="F:phosphatidylinositol binding"/>
    <property type="evidence" value="ECO:0000314"/>
    <property type="project" value="UniProtKB"/>
</dbReference>
<dbReference type="GO" id="GO:0006869">
    <property type="term" value="P:lipid transport"/>
    <property type="evidence" value="ECO:0007669"/>
    <property type="project" value="UniProtKB-KW"/>
</dbReference>
<dbReference type="GO" id="GO:0046677">
    <property type="term" value="P:response to antibiotic"/>
    <property type="evidence" value="ECO:0007669"/>
    <property type="project" value="UniProtKB-KW"/>
</dbReference>
<dbReference type="CDD" id="cd16334">
    <property type="entry name" value="LppX-like"/>
    <property type="match status" value="1"/>
</dbReference>
<dbReference type="FunFam" id="2.50.20.20:FF:000004">
    <property type="entry name" value="Lipoarabinomannan carrier protein LprG"/>
    <property type="match status" value="1"/>
</dbReference>
<dbReference type="Gene3D" id="2.50.20.20">
    <property type="match status" value="1"/>
</dbReference>
<dbReference type="InterPro" id="IPR029046">
    <property type="entry name" value="LolA/LolB/LppX"/>
</dbReference>
<dbReference type="InterPro" id="IPR009830">
    <property type="entry name" value="LppX/LprAFG"/>
</dbReference>
<dbReference type="Pfam" id="PF07161">
    <property type="entry name" value="LppX_LprAFG"/>
    <property type="match status" value="1"/>
</dbReference>
<dbReference type="SUPFAM" id="SSF89392">
    <property type="entry name" value="Prokaryotic lipoproteins and lipoprotein localization factors"/>
    <property type="match status" value="1"/>
</dbReference>
<dbReference type="PROSITE" id="PS51257">
    <property type="entry name" value="PROKAR_LIPOPROTEIN"/>
    <property type="match status" value="1"/>
</dbReference>
<name>LPRG_MYCTU</name>
<evidence type="ECO:0000250" key="1">
    <source>
        <dbReference type="UniProtKB" id="P9WK47"/>
    </source>
</evidence>
<evidence type="ECO:0000255" key="2">
    <source>
        <dbReference type="PROSITE-ProRule" id="PRU00303"/>
    </source>
</evidence>
<evidence type="ECO:0000269" key="3">
    <source>
    </source>
</evidence>
<evidence type="ECO:0000269" key="4">
    <source>
    </source>
</evidence>
<evidence type="ECO:0000269" key="5">
    <source>
    </source>
</evidence>
<evidence type="ECO:0000269" key="6">
    <source>
    </source>
</evidence>
<evidence type="ECO:0000269" key="7">
    <source>
    </source>
</evidence>
<evidence type="ECO:0000269" key="8">
    <source>
    </source>
</evidence>
<evidence type="ECO:0000269" key="9">
    <source>
    </source>
</evidence>
<evidence type="ECO:0000269" key="10">
    <source>
    </source>
</evidence>
<evidence type="ECO:0000269" key="11">
    <source>
    </source>
</evidence>
<evidence type="ECO:0000269" key="12">
    <source>
    </source>
</evidence>
<evidence type="ECO:0000269" key="13">
    <source>
    </source>
</evidence>
<evidence type="ECO:0000269" key="14">
    <source>
    </source>
</evidence>
<evidence type="ECO:0000269" key="15">
    <source>
    </source>
</evidence>
<evidence type="ECO:0000269" key="16">
    <source>
    </source>
</evidence>
<evidence type="ECO:0000303" key="17">
    <source>
    </source>
</evidence>
<evidence type="ECO:0000303" key="18">
    <source>
    </source>
</evidence>
<evidence type="ECO:0000303" key="19">
    <source>
    </source>
</evidence>
<evidence type="ECO:0000303" key="20">
    <source>
    </source>
</evidence>
<evidence type="ECO:0000305" key="21"/>
<evidence type="ECO:0000305" key="22">
    <source>
    </source>
</evidence>
<evidence type="ECO:0000305" key="23">
    <source>
    </source>
</evidence>
<evidence type="ECO:0000305" key="24">
    <source>
    </source>
</evidence>
<evidence type="ECO:0000305" key="25">
    <source>
    </source>
</evidence>
<evidence type="ECO:0007744" key="26">
    <source>
        <dbReference type="PDB" id="3MH8"/>
    </source>
</evidence>
<evidence type="ECO:0007744" key="27">
    <source>
        <dbReference type="PDB" id="3MH9"/>
    </source>
</evidence>
<evidence type="ECO:0007744" key="28">
    <source>
        <dbReference type="PDB" id="3MHA"/>
    </source>
</evidence>
<evidence type="ECO:0007744" key="29">
    <source>
        <dbReference type="PDB" id="4ZRA"/>
    </source>
</evidence>
<evidence type="ECO:0007829" key="30">
    <source>
        <dbReference type="PDB" id="3MH9"/>
    </source>
</evidence>
<gene>
    <name evidence="20" type="primary">lprG</name>
    <name type="synonym">lpp-27</name>
    <name type="ordered locus">Rv1411c</name>
    <name type="ORF">MTCY21B4.28c</name>
</gene>
<proteinExistence type="evidence at protein level"/>
<accession>P9WK45</accession>
<accession>L0T868</accession>
<accession>O32852</accession>
<accession>P0A5I8</accession>
<accession>P71679</accession>
<protein>
    <recommendedName>
        <fullName evidence="23 24">Lipoarabinomannan carrier protein LprG</fullName>
    </recommendedName>
    <alternativeName>
        <fullName>27 kDa lipoprotein</fullName>
    </alternativeName>
    <alternativeName>
        <fullName evidence="17">Antigen P27</fullName>
    </alternativeName>
    <alternativeName>
        <fullName evidence="20">Lipoprotein LprG</fullName>
    </alternativeName>
    <alternativeName>
        <fullName evidence="18">Triacylated glycolipid carrier LprG</fullName>
    </alternativeName>
    <alternativeName>
        <fullName evidence="19">Triacylglyceride transfer protein LprG</fullName>
    </alternativeName>
</protein>
<reference key="1">
    <citation type="journal article" date="1998" name="Nature">
        <title>Deciphering the biology of Mycobacterium tuberculosis from the complete genome sequence.</title>
        <authorList>
            <person name="Cole S.T."/>
            <person name="Brosch R."/>
            <person name="Parkhill J."/>
            <person name="Garnier T."/>
            <person name="Churcher C.M."/>
            <person name="Harris D.E."/>
            <person name="Gordon S.V."/>
            <person name="Eiglmeier K."/>
            <person name="Gas S."/>
            <person name="Barry C.E. III"/>
            <person name="Tekaia F."/>
            <person name="Badcock K."/>
            <person name="Basham D."/>
            <person name="Brown D."/>
            <person name="Chillingworth T."/>
            <person name="Connor R."/>
            <person name="Davies R.M."/>
            <person name="Devlin K."/>
            <person name="Feltwell T."/>
            <person name="Gentles S."/>
            <person name="Hamlin N."/>
            <person name="Holroyd S."/>
            <person name="Hornsby T."/>
            <person name="Jagels K."/>
            <person name="Krogh A."/>
            <person name="McLean J."/>
            <person name="Moule S."/>
            <person name="Murphy L.D."/>
            <person name="Oliver S."/>
            <person name="Osborne J."/>
            <person name="Quail M.A."/>
            <person name="Rajandream M.A."/>
            <person name="Rogers J."/>
            <person name="Rutter S."/>
            <person name="Seeger K."/>
            <person name="Skelton S."/>
            <person name="Squares S."/>
            <person name="Squares R."/>
            <person name="Sulston J.E."/>
            <person name="Taylor K."/>
            <person name="Whitehead S."/>
            <person name="Barrell B.G."/>
        </authorList>
    </citation>
    <scope>NUCLEOTIDE SEQUENCE [LARGE SCALE GENOMIC DNA]</scope>
    <source>
        <strain>ATCC 25618 / H37Rv</strain>
    </source>
</reference>
<reference key="2">
    <citation type="journal article" date="2004" name="Microbes Infect.">
        <title>The knockout of the lprG-Rv1410 operon produces strong attenuation of Mycobacterium tuberculosis.</title>
        <authorList>
            <person name="Bigi F."/>
            <person name="Gioffre A."/>
            <person name="Klepp L."/>
            <person name="Santangelo M.P."/>
            <person name="Alito A."/>
            <person name="Caimi K."/>
            <person name="Meikle V."/>
            <person name="Zumarraga M."/>
            <person name="Taboga O."/>
            <person name="Romano M.I."/>
            <person name="Cataldi A."/>
        </authorList>
    </citation>
    <scope>OPERON STRUCTURE</scope>
    <scope>DISRUPTION PHENOTYPE</scope>
    <scope>VIRULENCE</scope>
    <source>
        <strain>H37Rv</strain>
    </source>
</reference>
<reference key="3">
    <citation type="journal article" date="2004" name="J. Immunol.">
        <title>Mycobacterium tuberculosis LprG (Rv1411c): a novel TLR-2 ligand that inhibits human macrophage class II MHC antigen processing.</title>
        <authorList>
            <person name="Gehring A.J."/>
            <person name="Dobos K.M."/>
            <person name="Belisle J.T."/>
            <person name="Harding C.V."/>
            <person name="Boom W.H."/>
        </authorList>
    </citation>
    <scope>IDENTIFICATION BY MASS SPECTROMETRY</scope>
    <scope>FUNCTION</scope>
    <source>
        <strain>ATCC 25618 / H37Rv</strain>
    </source>
</reference>
<reference key="4">
    <citation type="journal article" date="2008" name="J. Bacteriol.">
        <title>Function of a mycobacterial major facilitator superfamily pump requires a membrane-associated lipoprotein.</title>
        <authorList>
            <person name="Farrow M.F."/>
            <person name="Rubin E.J."/>
        </authorList>
    </citation>
    <scope>FUNCTION</scope>
    <source>
        <strain>H37Rv</strain>
    </source>
</reference>
<reference key="5">
    <citation type="journal article" date="2008" name="J. Immunol.">
        <title>Conserved mycobacterial lipoglycoproteins activate TLR2 but also require glycosylation for MHC class II-restricted T cell activation.</title>
        <authorList>
            <person name="Sieling P.A."/>
            <person name="Hill P.J."/>
            <person name="Dobos K.M."/>
            <person name="Brookman K."/>
            <person name="Kuhlman A.M."/>
            <person name="Fabri M."/>
            <person name="Krutzik S.R."/>
            <person name="Rea T.H."/>
            <person name="Heaslip D.G."/>
            <person name="Belisle J.T."/>
            <person name="Modlin R.L."/>
        </authorList>
    </citation>
    <scope>FUNCTION IN INFECTION</scope>
    <scope>GLYCOSYLATION</scope>
</reference>
<reference key="6">
    <citation type="journal article" date="2009" name="Cell. Immunol.">
        <title>TLR2 and its co-receptors determine responses of macrophages and dendritic cells to lipoproteins of Mycobacterium tuberculosis.</title>
        <authorList>
            <person name="Drage M.G."/>
            <person name="Pecora N.D."/>
            <person name="Hise A.G."/>
            <person name="Febbraio M."/>
            <person name="Silverstein R.L."/>
            <person name="Golenbock D.T."/>
            <person name="Boom W.H."/>
            <person name="Harding C.V."/>
        </authorList>
    </citation>
    <scope>FUNCTION IN INFECTION</scope>
    <source>
        <strain>H37Rv</strain>
    </source>
</reference>
<reference key="7">
    <citation type="journal article" date="2011" name="Infect. Immun.">
        <title>Mycobacterium tuberculosis lipoproteins directly regulate human memory CD4(+) T cell activation via Toll-like receptors 1 and 2.</title>
        <authorList>
            <person name="Lancioni C.L."/>
            <person name="Li Q."/>
            <person name="Thomas J.J."/>
            <person name="Ding X."/>
            <person name="Thiel B."/>
            <person name="Drage M.G."/>
            <person name="Pecora N.D."/>
            <person name="Ziady A.G."/>
            <person name="Shank S."/>
            <person name="Harding C.V."/>
            <person name="Boom W.H."/>
            <person name="Rojas R.E."/>
        </authorList>
    </citation>
    <scope>FUNCTION</scope>
    <scope>GLYCOSYLATION</scope>
    <source>
        <strain>ATCC 25177 / H37Ra</strain>
        <strain>H37Rv</strain>
    </source>
</reference>
<reference key="8">
    <citation type="journal article" date="2011" name="J. Clin. Invest.">
        <title>Mycobacteria release active membrane vesicles that modulate immune responses in a TLR2-dependent manner in mice.</title>
        <authorList>
            <person name="Prados-Rosales R."/>
            <person name="Baena A."/>
            <person name="Martinez L.R."/>
            <person name="Luque-Garcia J."/>
            <person name="Kalscheuer R."/>
            <person name="Veeraraghavan U."/>
            <person name="Camara C."/>
            <person name="Nosanchuk J.D."/>
            <person name="Besra G.S."/>
            <person name="Chen B."/>
            <person name="Jimenez J."/>
            <person name="Glatman-Freedman A."/>
            <person name="Jacobs W.R. Jr."/>
            <person name="Porcelli S.A."/>
            <person name="Casadevall A."/>
        </authorList>
    </citation>
    <scope>SUBCELLULAR LOCATION</scope>
    <source>
        <strain>H37Rv</strain>
    </source>
</reference>
<reference key="9">
    <citation type="journal article" date="2011" name="BMC Infect. Dis.">
        <title>Role of P27 -P55 operon from Mycobacterium tuberculosis in the resistance to toxic compounds.</title>
        <authorList>
            <person name="Bianco M.V."/>
            <person name="Blanco F.C."/>
            <person name="Imperiale B."/>
            <person name="Forrellad M.A."/>
            <person name="Rocha R.V."/>
            <person name="Klepp L.I."/>
            <person name="Cataldi A.A."/>
            <person name="Morcillo N."/>
            <person name="Bigi F."/>
        </authorList>
    </citation>
    <scope>FUNCTION</scope>
    <scope>SUBCELLULAR LOCATION</scope>
    <scope>OPERON STRUCTURE</scope>
    <scope>DISRUPTION PHENOTYPE</scope>
    <source>
        <strain>H37Rv</strain>
    </source>
</reference>
<reference key="10">
    <citation type="journal article" date="2011" name="Mol. Cell. Proteomics">
        <title>Proteogenomic analysis of Mycobacterium tuberculosis by high resolution mass spectrometry.</title>
        <authorList>
            <person name="Kelkar D.S."/>
            <person name="Kumar D."/>
            <person name="Kumar P."/>
            <person name="Balakrishnan L."/>
            <person name="Muthusamy B."/>
            <person name="Yadav A.K."/>
            <person name="Shrivastava P."/>
            <person name="Marimuthu A."/>
            <person name="Anand S."/>
            <person name="Sundaram H."/>
            <person name="Kingsbury R."/>
            <person name="Harsha H.C."/>
            <person name="Nair B."/>
            <person name="Prasad T.S."/>
            <person name="Chauhan D.S."/>
            <person name="Katoch K."/>
            <person name="Katoch V.M."/>
            <person name="Kumar P."/>
            <person name="Chaerkady R."/>
            <person name="Ramachandran S."/>
            <person name="Dash D."/>
            <person name="Pandey A."/>
        </authorList>
    </citation>
    <scope>IDENTIFICATION BY MASS SPECTROMETRY [LARGE SCALE ANALYSIS]</scope>
    <source>
        <strain>ATCC 25618 / H37Rv</strain>
    </source>
</reference>
<reference key="11">
    <citation type="journal article" date="2014" name="Chem. Biol. Drug Des.">
        <title>Specific interaction between Mycobacterium tuberculosis lipoprotein-derived peptides and target cells inhibits mycobacterial entry in vitro.</title>
        <authorList>
            <person name="Ocampo M."/>
            <person name="Curtidor H."/>
            <person name="Vanegas M."/>
            <person name="Patarroyo M.A."/>
            <person name="Patarroyo M.E."/>
        </authorList>
    </citation>
    <scope>SUBCELLULAR LOCATION</scope>
    <scope>DOMAIN</scope>
</reference>
<reference key="12">
    <citation type="journal article" date="2014" name="PLoS Pathog.">
        <title>LprG-mediated surface expression of lipoarabinomannan is essential for virulence of Mycobacterium tuberculosis.</title>
        <authorList>
            <person name="Gaur R.L."/>
            <person name="Ren K."/>
            <person name="Blumenthal A."/>
            <person name="Bhamidi S."/>
            <person name="Gibbs S."/>
            <person name="Jackson M."/>
            <person name="Zare R.N."/>
            <person name="Ehrt S."/>
            <person name="Ernst J.D."/>
            <person name="Banaei N."/>
        </authorList>
    </citation>
    <scope>FUNCTION</scope>
    <scope>DISRUPTION PHENOTYPE</scope>
    <source>
        <strain>H37Rv</strain>
    </source>
</reference>
<reference key="13">
    <citation type="journal article" date="2015" name="PLoS Pathog.">
        <title>Correction: LprG-mediated surface expression of lipoarabinomannan is essential for virulence of Mycobacterium tuberculosis.</title>
        <authorList>
            <person name="Gaur R.L."/>
            <person name="Ren K."/>
            <person name="Blumenthal A."/>
            <person name="Bhamidi S."/>
            <person name="Gibbs S."/>
            <person name="Jackson M."/>
            <person name="Zare R.N."/>
            <person name="Ehrt S."/>
            <person name="Ernst J.D."/>
            <person name="Banaei N."/>
        </authorList>
    </citation>
    <scope>ERRATUM OF PUBMED:25232742</scope>
</reference>
<reference key="14">
    <citation type="journal article" date="2014" name="PLoS Pathog.">
        <title>Mycobacterium tuberculosis lipoprotein LprG binds lipoarabinomannan and determines its cell envelope localization to control phagolysosomal fusion.</title>
        <authorList>
            <person name="Shukla S."/>
            <person name="Richardson E.T."/>
            <person name="Athman J.J."/>
            <person name="Shi L."/>
            <person name="Wearsch P.A."/>
            <person name="McDonald D."/>
            <person name="Banaei N."/>
            <person name="Boom W.H."/>
            <person name="Jackson M."/>
            <person name="Harding C.V."/>
        </authorList>
    </citation>
    <scope>FUNCTION</scope>
    <scope>LIPID-BINDING</scope>
    <scope>DISRUPTION PHENOTYPE</scope>
    <scope>MUTAGENESIS OF VAL-91</scope>
    <source>
        <strain>H37Rv</strain>
    </source>
</reference>
<reference key="15">
    <citation type="journal article" date="2019" name="Mol. Microbiol.">
        <title>Increased drug permeability of a stiffened mycobacterial outer membrane in cells lacking MFS transporter Rv1410 and lipoprotein LprG.</title>
        <authorList>
            <person name="Hohl M."/>
            <person name="Remm S."/>
            <person name="Eskandarian H.A."/>
            <person name="Dal Molin M."/>
            <person name="Arnold F.M."/>
            <person name="Huerlimann L.M."/>
            <person name="Kruegel A."/>
            <person name="Fantner G.E."/>
            <person name="Sander P."/>
            <person name="Seeger M.A."/>
        </authorList>
    </citation>
    <scope>MUTAGENESIS OF VAL-91</scope>
    <source>
        <strain>H37Rv</strain>
    </source>
</reference>
<reference key="16">
    <citation type="journal article" date="2010" name="Nat. Rev. Microbiol.">
        <title>Regulation of antigen presentation by Mycobacterium tuberculosis: a role for Toll-like receptors.</title>
        <authorList>
            <person name="Harding C.V."/>
            <person name="Boom W.H."/>
        </authorList>
    </citation>
    <scope>REVIEW</scope>
</reference>
<reference evidence="26 27 28" key="17">
    <citation type="journal article" date="2010" name="Nat. Struct. Mol. Biol.">
        <title>Mycobacterium tuberculosis lipoprotein LprG (Rv1411c) binds triacylated glycolipid agonists of Toll-like receptor 2.</title>
        <authorList>
            <person name="Drage M.G."/>
            <person name="Tsai H.C."/>
            <person name="Pecora N.D."/>
            <person name="Cheng T.Y."/>
            <person name="Arida A.R."/>
            <person name="Shukla S."/>
            <person name="Rojas R.E."/>
            <person name="Seshadri C."/>
            <person name="Moody D.B."/>
            <person name="Boom W.H."/>
            <person name="Sacchettini J.C."/>
            <person name="Harding C.V."/>
        </authorList>
    </citation>
    <scope>X-RAY CRYSTALLOGRAPHY (1.79 ANGSTROMS) OF 28-236</scope>
    <scope>FUNCTION</scope>
    <scope>DOMAIN</scope>
    <scope>LIPID-BINDING</scope>
    <scope>PALMITOYLATION AT CYS-27</scope>
    <scope>DIACYLGLYCEROL AT CYS-27</scope>
    <scope>MUTAGENESIS OF VAL-91</scope>
    <source>
        <strain>H37Rv</strain>
    </source>
</reference>
<reference evidence="29" key="18">
    <citation type="journal article" date="2016" name="PLoS Pathog.">
        <title>Mycobacterial metabolic syndrome: LprG and Rv1410 regulate triacylglyceride levels, growth rate and virulence in Mycobacterium tuberculosis.</title>
        <authorList>
            <person name="Martinot A.J."/>
            <person name="Farrow M."/>
            <person name="Bai L."/>
            <person name="Layre E."/>
            <person name="Cheng T.Y."/>
            <person name="Tsai J.H."/>
            <person name="Iqbal J."/>
            <person name="Annand J.W."/>
            <person name="Sullivan Z.A."/>
            <person name="Hussain M.M."/>
            <person name="Sacchettini J."/>
            <person name="Moody D.B."/>
            <person name="Seeliger J.C."/>
            <person name="Rubin E.J."/>
        </authorList>
    </citation>
    <scope>X-RAY CRYSTALLOGRAPHY (1.83 ANGSTROMS) OF 36-231 IN COMPLEX WITH TRIACYLGLYCERIDE</scope>
    <scope>FUNCTION</scope>
    <scope>DOMAIN</scope>
    <scope>TRIACYLGLYCERIDE-BINDING</scope>
    <scope>DISRUPTION PHENOTYPE</scope>
    <scope>MUTAGENESIS OF VAL-91</scope>
    <source>
        <strain>H37Rv</strain>
    </source>
</reference>
<comment type="function">
    <text evidence="5 8 11 13 14 15">Helps membrane protein Rv1410c (P55) transport triacylglycerides (TAG) across the inner cell membrane into the periplasm; TAG probably regulates lipid metabolism and growth regulation and plays a structural role in the outer membrane (PubMed:26751071). Binds TAG in its hydrophobic cavity and transfers it between lipid bilayers, probably to the outer membrane in vivo (PubMed:26751071). Binds di- and triacylated phosphatidyl-myo-inositol mannosides (PIMs), and glycolipid lipoglycan modulins lipoarabinomannan (LAM) and lipomannan (LM), facilitating their recognition by TLR2 (PubMed:20694006, PubMed:25356793). Binds LM &gt; PIM6 &gt; ManLAM &gt; PI-LAM &gt; PIM2 (mannose-capped LAM and phospho-myo-inositol-capped LAM, E.coli expressed without acyl-groups); deacylated LM and LAM also bind to this protein via their mannose moieties, showing LprG has at least 2 different ways to bind glycolipids (PubMed:25356793). Binds triacylglycerides (TAG) in the same cavity, is able to transfer TAG between lipid bilayers (PubMed:26751071). Overexpression of LprG and Rv1410c leads to increased levels of TAG in the culture medium (PubMed:26751071). Required for Rv1410c-mediated drug resistance (PubMed:18156250, PubMed:21762531). Required, probably with Rv1410c, for normal surface localization of LAM (PubMed:25232742).</text>
</comment>
<comment type="function">
    <text evidence="4 6 7 8 9">A host TLR2 agonist (toll-like receptor), shown experimentally for human and mouse (PubMed:19362712). Inhibits primary human macrophage MHC-II Ag processing via TLR2 (PubMed:15294983). Both lipidated and nonlipidated protein act as TLR2 agonists in antigen-presenting cells, although lipidated protein is more efficient (PubMed:20694006). In resting human CD4+ T-cells lipidated but not nonlipidated protein is a costimulatory ligand (with anti-CD3 and anti-CD28) for T-cell proliferation and IFN-gamma and IL-2 production, leading to increased expression of early T-cell activation markers, TLR2 and NFKB3 phosphorylation (PubMed:21078852). Human CD4+ T-cells use TLR1/TLR2 heterodimers to respond to this and probably other mycobacterial lipoproteins (PubMed:21078852). Able to stimulate proliferation of CD4+ T-cells derived from a human leprosy patient following protein processing/presentation by MHC class II molecules in peripheral blood mononuclear cells (PubMed:18424702). Requires both host TLR1 and TLR2 as coreceptors to elicit host response in mouse, although TLR6 may play a redundant role, has a partial requirement for CD14 as an accessory receptor (PubMed:19362712).</text>
</comment>
<comment type="subcellular location">
    <subcellularLocation>
        <location evidence="2 11 21">Cell inner membrane</location>
        <topology evidence="2">Lipid-anchor</topology>
        <orientation evidence="21">Periplasmic side</orientation>
    </subcellularLocation>
    <subcellularLocation>
        <location evidence="11">Secreted</location>
        <location evidence="11">Cell wall</location>
    </subcellularLocation>
    <subcellularLocation>
        <location evidence="11">Secreted</location>
    </subcellularLocation>
    <subcellularLocation>
        <location evidence="12">Cell surface</location>
    </subcellularLocation>
    <text evidence="10 12">Present in extracytoplasmic vesicles (PubMed:21364279). Immunoelectron microscopy indicates this protein is close to the cell surface (PubMed:25041568).</text>
</comment>
<comment type="induction">
    <text evidence="3 11">Part of the lprG-Rv1410c operon (PubMed:14998516, PubMed:21762531).</text>
</comment>
<comment type="domain">
    <text evidence="8 12 15">Forms a U-shaped beta-half-barrel with a small hydrophobic cavity (1500 Angstroms (3)) which holds a triacylated PIM in 1 crystal structure; the 3 acyl chains are within the cavity while the sugar moieties bind to the protein surface (PubMed:20694006). In the structure bound to triacylglycerides (TAG) 2 of the 3 acyl chains are buried in the cavity, the third is solvent exposed (PubMed:26751071). A flexible lid region may move to accommodate different TAG molecules (PubMed:26751071). Fragments of the mature protein (residues 81-100, 141-160 and 218-236) prevent uptake of M.tuberculosis by a human macrophage-like cell line; lesser effects are seen on bacterial uptake by a human lung epithelial cell line (PubMed:25041568).</text>
</comment>
<comment type="PTM">
    <text evidence="1 6 22">Modified by Lgt on Cys-27 with an S-linked diacylglyceral, signal peptide is removed by LspA, Cys-27 is further modifed with a fatty acid on its amino group by Lnt yielding a triacylated protein (Probable). Probably glycosylated, which is required for T-cell activation (PubMed:18424702).</text>
</comment>
<comment type="disruption phenotype">
    <text evidence="3 11 13 14 15">A single deletion mutant leads to loss of expression of efflux pump Rv1410c due to polar effects; in infected BALB/c mice 1.5 and 2.5 log decrease in bacterial load 15 and 35 days after infection (PubMed:14998516). The single mutant increases sensitivity to malachite green, sodium dodecyl sulfate (SDS), isoniazid, ethambutal and ethidium bromide, alters the permeability of the cell wall; both genes of the operon are required to fully restore the phenotypes (PubMed:21762531). Single deletion mutant (probably without Rv1410c) has decreased surface-exposed glycolipid lipoarabinomannan (LAM), although cellular LAM, LM and PIM content is normal (PubMed:25232742, PubMed:25356793). Disruption of either Rv1410c or the lrpG-Rv1410c operon leads to increased levels of many triacylglyceride (TAG) alkylforms; up to 100-fold increase depending on the exact TAG form (PubMed:26751071). It also forms smaller colonies on agar (PubMed:25232742). Loss of surface LAM has several consequences; bacteria enter mouse macrophages with reduced efficiency and block mouse macrophage phagosome-lysosome fusion less efficiently than wild-type (PubMed:25232742). Reduced efficiency of mouse macrophage phagosome-lysosome fusion was seen in another study (PubMed:25356793). C57BL/6 mice infected with mutant bacteria have 10-fold less bacterial burden after 10 days and about 2700-fold less burden after 70 days; attenuation of mutant is not rescued in macrophages impaired for reactive oxygen or nitrogen generation (disruption of Ncf1 or iNOS) (PubMed:25232742).</text>
</comment>
<comment type="miscellaneous">
    <text evidence="23 24">Bacterial LAM blocks host cell phagosome-lysosome fusion and is one way in which M.tuberculosis evades the host immune system.</text>
</comment>
<comment type="miscellaneous">
    <text evidence="25">Triacylglycerides accumulate in lipid droplets in the cytoplasm of M.tuberculosis stationary phase and dormant bacteria, and are used as an energy source during starvation (PubMed:26751071).</text>
</comment>
<comment type="similarity">
    <text evidence="21">Belongs to the LppX/LprAFG lipoprotein family.</text>
</comment>
<organism>
    <name type="scientific">Mycobacterium tuberculosis (strain ATCC 25618 / H37Rv)</name>
    <dbReference type="NCBI Taxonomy" id="83332"/>
    <lineage>
        <taxon>Bacteria</taxon>
        <taxon>Bacillati</taxon>
        <taxon>Actinomycetota</taxon>
        <taxon>Actinomycetes</taxon>
        <taxon>Mycobacteriales</taxon>
        <taxon>Mycobacteriaceae</taxon>
        <taxon>Mycobacterium</taxon>
        <taxon>Mycobacterium tuberculosis complex</taxon>
    </lineage>
</organism>
<feature type="signal peptide" evidence="2">
    <location>
        <begin position="1"/>
        <end position="26"/>
    </location>
</feature>
<feature type="chain" id="PRO_0000018146" description="Lipoarabinomannan carrier protein LprG" evidence="2">
    <location>
        <begin position="27"/>
        <end position="236"/>
    </location>
</feature>
<feature type="region of interest" description="Prevents bacterial uptake by a human macrophage-like cell line" evidence="12">
    <location>
        <begin position="81"/>
        <end position="100"/>
    </location>
</feature>
<feature type="region of interest" description="Prevents bacterial uptake by a human macrophage-like cell line" evidence="12">
    <location>
        <begin position="141"/>
        <end position="160"/>
    </location>
</feature>
<feature type="region of interest" description="Prevents bacterial uptake by a human macrophage-like cell line" evidence="12">
    <location>
        <begin position="218"/>
        <end position="236"/>
    </location>
</feature>
<feature type="lipid moiety-binding region" description="N-palmitoyl cysteine" evidence="2 22">
    <location>
        <position position="27"/>
    </location>
</feature>
<feature type="lipid moiety-binding region" description="S-diacylglycerol cysteine" evidence="2 22">
    <location>
        <position position="27"/>
    </location>
</feature>
<feature type="mutagenesis site" description="Decreased TLR2 agonist activity, cannot acquire lipid from mycobacterial extracts, cavity entrance and size decrease. Binds PIM6, LM and ManLAM 10-100-fold less well than wild-type, binds de-acylated LM and ManLAM as well as wild-type. Decreased ability to transfer triacylglyceride between lipid bilayers. Partially complements a deletion of this operon for antibiotic resistance in M.smegmatis." evidence="8 14 15 16">
    <original>V</original>
    <variation>W</variation>
    <location>
        <position position="91"/>
    </location>
</feature>
<feature type="helix" evidence="30">
    <location>
        <begin position="41"/>
        <end position="53"/>
    </location>
</feature>
<feature type="strand" evidence="30">
    <location>
        <begin position="57"/>
        <end position="66"/>
    </location>
</feature>
<feature type="strand" evidence="30">
    <location>
        <begin position="73"/>
        <end position="81"/>
    </location>
</feature>
<feature type="turn" evidence="30">
    <location>
        <begin position="82"/>
        <end position="85"/>
    </location>
</feature>
<feature type="strand" evidence="30">
    <location>
        <begin position="86"/>
        <end position="95"/>
    </location>
</feature>
<feature type="strand" evidence="30">
    <location>
        <begin position="98"/>
        <end position="107"/>
    </location>
</feature>
<feature type="strand" evidence="30">
    <location>
        <begin position="110"/>
        <end position="116"/>
    </location>
</feature>
<feature type="strand" evidence="30">
    <location>
        <begin position="119"/>
        <end position="125"/>
    </location>
</feature>
<feature type="helix" evidence="30">
    <location>
        <begin position="126"/>
        <end position="128"/>
    </location>
</feature>
<feature type="helix" evidence="30">
    <location>
        <begin position="132"/>
        <end position="135"/>
    </location>
</feature>
<feature type="turn" evidence="30">
    <location>
        <begin position="138"/>
        <end position="140"/>
    </location>
</feature>
<feature type="helix" evidence="30">
    <location>
        <begin position="142"/>
        <end position="147"/>
    </location>
</feature>
<feature type="strand" evidence="30">
    <location>
        <begin position="149"/>
        <end position="160"/>
    </location>
</feature>
<feature type="strand" evidence="30">
    <location>
        <begin position="163"/>
        <end position="172"/>
    </location>
</feature>
<feature type="helix" evidence="30">
    <location>
        <begin position="174"/>
        <end position="180"/>
    </location>
</feature>
<feature type="helix" evidence="30">
    <location>
        <begin position="182"/>
        <end position="184"/>
    </location>
</feature>
<feature type="strand" evidence="30">
    <location>
        <begin position="190"/>
        <end position="199"/>
    </location>
</feature>
<feature type="strand" evidence="30">
    <location>
        <begin position="204"/>
        <end position="212"/>
    </location>
</feature>
<feature type="strand" evidence="30">
    <location>
        <begin position="215"/>
        <end position="223"/>
    </location>
</feature>